<name>SECA2_LACJO</name>
<comment type="function">
    <text evidence="1">Part of the Sec protein translocase complex. Interacts with the SecYEG preprotein conducting channel. Has a central role in coupling the hydrolysis of ATP to the transfer of proteins into and across the cell membrane, serving as an ATP-driven molecular motor driving the stepwise translocation of polypeptide chains across the membrane.</text>
</comment>
<comment type="catalytic activity">
    <reaction evidence="1">
        <text>ATP + H2O + cellular proteinSide 1 = ADP + phosphate + cellular proteinSide 2.</text>
        <dbReference type="EC" id="7.4.2.8"/>
    </reaction>
</comment>
<comment type="subunit">
    <text evidence="1">Monomer and homodimer. Part of the essential Sec protein translocation apparatus which comprises SecA, SecYEG and auxiliary proteins SecDF. Other proteins may also be involved.</text>
</comment>
<comment type="subcellular location">
    <subcellularLocation>
        <location evidence="1">Cell membrane</location>
        <topology evidence="1">Peripheral membrane protein</topology>
        <orientation evidence="1">Cytoplasmic side</orientation>
    </subcellularLocation>
    <subcellularLocation>
        <location evidence="1">Cytoplasm</location>
    </subcellularLocation>
    <text evidence="1">Distribution is 50-50.</text>
</comment>
<comment type="similarity">
    <text evidence="1">Belongs to the SecA family.</text>
</comment>
<accession>Q74L37</accession>
<proteinExistence type="inferred from homology"/>
<dbReference type="EC" id="7.4.2.8" evidence="1"/>
<dbReference type="EMBL" id="AE017198">
    <property type="protein sequence ID" value="AAS08378.1"/>
    <property type="molecule type" value="Genomic_DNA"/>
</dbReference>
<dbReference type="RefSeq" id="WP_011161547.1">
    <property type="nucleotide sequence ID" value="NC_005362.1"/>
</dbReference>
<dbReference type="SMR" id="Q74L37"/>
<dbReference type="KEGG" id="ljo:LJ_0388"/>
<dbReference type="PATRIC" id="fig|257314.6.peg.410"/>
<dbReference type="eggNOG" id="COG0653">
    <property type="taxonomic scope" value="Bacteria"/>
</dbReference>
<dbReference type="HOGENOM" id="CLU_005314_3_2_9"/>
<dbReference type="Proteomes" id="UP000000581">
    <property type="component" value="Chromosome"/>
</dbReference>
<dbReference type="GO" id="GO:0031522">
    <property type="term" value="C:cell envelope Sec protein transport complex"/>
    <property type="evidence" value="ECO:0007669"/>
    <property type="project" value="TreeGrafter"/>
</dbReference>
<dbReference type="GO" id="GO:0005829">
    <property type="term" value="C:cytosol"/>
    <property type="evidence" value="ECO:0007669"/>
    <property type="project" value="TreeGrafter"/>
</dbReference>
<dbReference type="GO" id="GO:0005886">
    <property type="term" value="C:plasma membrane"/>
    <property type="evidence" value="ECO:0007669"/>
    <property type="project" value="UniProtKB-SubCell"/>
</dbReference>
<dbReference type="GO" id="GO:0005524">
    <property type="term" value="F:ATP binding"/>
    <property type="evidence" value="ECO:0007669"/>
    <property type="project" value="UniProtKB-UniRule"/>
</dbReference>
<dbReference type="GO" id="GO:0008564">
    <property type="term" value="F:protein-exporting ATPase activity"/>
    <property type="evidence" value="ECO:0007669"/>
    <property type="project" value="UniProtKB-EC"/>
</dbReference>
<dbReference type="GO" id="GO:0065002">
    <property type="term" value="P:intracellular protein transmembrane transport"/>
    <property type="evidence" value="ECO:0007669"/>
    <property type="project" value="UniProtKB-UniRule"/>
</dbReference>
<dbReference type="GO" id="GO:0017038">
    <property type="term" value="P:protein import"/>
    <property type="evidence" value="ECO:0007669"/>
    <property type="project" value="InterPro"/>
</dbReference>
<dbReference type="GO" id="GO:0006605">
    <property type="term" value="P:protein targeting"/>
    <property type="evidence" value="ECO:0007669"/>
    <property type="project" value="UniProtKB-UniRule"/>
</dbReference>
<dbReference type="GO" id="GO:0043952">
    <property type="term" value="P:protein transport by the Sec complex"/>
    <property type="evidence" value="ECO:0007669"/>
    <property type="project" value="TreeGrafter"/>
</dbReference>
<dbReference type="CDD" id="cd17928">
    <property type="entry name" value="DEXDc_SecA"/>
    <property type="match status" value="1"/>
</dbReference>
<dbReference type="CDD" id="cd18803">
    <property type="entry name" value="SF2_C_secA"/>
    <property type="match status" value="1"/>
</dbReference>
<dbReference type="FunFam" id="3.40.50.300:FF:000429">
    <property type="entry name" value="Preprotein translocase subunit SecA"/>
    <property type="match status" value="1"/>
</dbReference>
<dbReference type="Gene3D" id="1.10.3060.10">
    <property type="entry name" value="Helical scaffold and wing domains of SecA"/>
    <property type="match status" value="1"/>
</dbReference>
<dbReference type="Gene3D" id="3.40.50.300">
    <property type="entry name" value="P-loop containing nucleotide triphosphate hydrolases"/>
    <property type="match status" value="2"/>
</dbReference>
<dbReference type="Gene3D" id="3.90.1440.10">
    <property type="entry name" value="SecA, preprotein cross-linking domain"/>
    <property type="match status" value="1"/>
</dbReference>
<dbReference type="HAMAP" id="MF_01382">
    <property type="entry name" value="SecA"/>
    <property type="match status" value="1"/>
</dbReference>
<dbReference type="InterPro" id="IPR014001">
    <property type="entry name" value="Helicase_ATP-bd"/>
</dbReference>
<dbReference type="InterPro" id="IPR001650">
    <property type="entry name" value="Helicase_C-like"/>
</dbReference>
<dbReference type="InterPro" id="IPR027417">
    <property type="entry name" value="P-loop_NTPase"/>
</dbReference>
<dbReference type="InterPro" id="IPR000185">
    <property type="entry name" value="SecA"/>
</dbReference>
<dbReference type="InterPro" id="IPR022490">
    <property type="entry name" value="SecA2"/>
</dbReference>
<dbReference type="InterPro" id="IPR020937">
    <property type="entry name" value="SecA_CS"/>
</dbReference>
<dbReference type="InterPro" id="IPR011115">
    <property type="entry name" value="SecA_DEAD"/>
</dbReference>
<dbReference type="InterPro" id="IPR014018">
    <property type="entry name" value="SecA_motor_DEAD"/>
</dbReference>
<dbReference type="InterPro" id="IPR011130">
    <property type="entry name" value="SecA_preprotein_X-link_dom"/>
</dbReference>
<dbReference type="InterPro" id="IPR044722">
    <property type="entry name" value="SecA_SF2_C"/>
</dbReference>
<dbReference type="InterPro" id="IPR011116">
    <property type="entry name" value="SecA_Wing/Scaffold"/>
</dbReference>
<dbReference type="InterPro" id="IPR036266">
    <property type="entry name" value="SecA_Wing/Scaffold_sf"/>
</dbReference>
<dbReference type="InterPro" id="IPR036670">
    <property type="entry name" value="SecA_X-link_sf"/>
</dbReference>
<dbReference type="NCBIfam" id="NF006630">
    <property type="entry name" value="PRK09200.1"/>
    <property type="match status" value="1"/>
</dbReference>
<dbReference type="NCBIfam" id="TIGR03714">
    <property type="entry name" value="secA2"/>
    <property type="match status" value="1"/>
</dbReference>
<dbReference type="PANTHER" id="PTHR30612:SF0">
    <property type="entry name" value="CHLOROPLAST PROTEIN-TRANSPORTING ATPASE"/>
    <property type="match status" value="1"/>
</dbReference>
<dbReference type="PANTHER" id="PTHR30612">
    <property type="entry name" value="SECA INNER MEMBRANE COMPONENT OF SEC PROTEIN SECRETION SYSTEM"/>
    <property type="match status" value="1"/>
</dbReference>
<dbReference type="Pfam" id="PF21090">
    <property type="entry name" value="P-loop_SecA"/>
    <property type="match status" value="2"/>
</dbReference>
<dbReference type="Pfam" id="PF07517">
    <property type="entry name" value="SecA_DEAD"/>
    <property type="match status" value="1"/>
</dbReference>
<dbReference type="Pfam" id="PF01043">
    <property type="entry name" value="SecA_PP_bind"/>
    <property type="match status" value="1"/>
</dbReference>
<dbReference type="Pfam" id="PF07516">
    <property type="entry name" value="SecA_SW"/>
    <property type="match status" value="1"/>
</dbReference>
<dbReference type="PRINTS" id="PR00906">
    <property type="entry name" value="SECA"/>
</dbReference>
<dbReference type="SMART" id="SM00957">
    <property type="entry name" value="SecA_DEAD"/>
    <property type="match status" value="1"/>
</dbReference>
<dbReference type="SMART" id="SM00958">
    <property type="entry name" value="SecA_PP_bind"/>
    <property type="match status" value="1"/>
</dbReference>
<dbReference type="SUPFAM" id="SSF81886">
    <property type="entry name" value="Helical scaffold and wing domains of SecA"/>
    <property type="match status" value="1"/>
</dbReference>
<dbReference type="SUPFAM" id="SSF52540">
    <property type="entry name" value="P-loop containing nucleoside triphosphate hydrolases"/>
    <property type="match status" value="2"/>
</dbReference>
<dbReference type="SUPFAM" id="SSF81767">
    <property type="entry name" value="Pre-protein crosslinking domain of SecA"/>
    <property type="match status" value="1"/>
</dbReference>
<dbReference type="PROSITE" id="PS01312">
    <property type="entry name" value="SECA"/>
    <property type="match status" value="1"/>
</dbReference>
<dbReference type="PROSITE" id="PS51196">
    <property type="entry name" value="SECA_MOTOR_DEAD"/>
    <property type="match status" value="1"/>
</dbReference>
<sequence>MLTDRLRLKKARKLLNKINKLGPKMQAMSDEKLQGQTAIFKKQLKEGKSLDDILPEAYATVREADKRILGMFPYDVQVLGAIVLHNGSIAEMKTGEGKTLVATMALYLNALEGKGAMLVTPNGYLASRDKKELAPVYEWLGLSVSLAFAEEKDSKKKITAKTKRKWYNSDIVYTTASSLAFDYLFNNLASSKENQYLRPFNYVIVDEVDEVLLDEAQTPFVVSSSPNVQSNLYHLADQFVRLLDPEVDYVFKKDDQLFWLTAHGIEKAEQFFKLDSLFSNESRSVYRHIILAMGAHLTMRRGHDYLVVKGEVVLLDEDSGRLKRGVQVSTGIHQAVEAKEKVELTKIQKTAASITFPALFALFNKVSGMSGTAKVNEEEFLQTYNLKVVTIPTRVPVIRKDYRPLIFLTTIDKLMTAVDDVVEMHKTGRPVLLVAGSVENSEIISELLLNIGIPHNVLNAYNAAYEAQIIKNAGQKNAVTIATNMAGRGTDIKLGPGVKELGGLAVIGTEMLPKRVELQLAGRAGRQGDPGSSQFLISLEDSFISSNNTPRQKKYYRKLMKKKSKGKDITLLSGPRIRFSLLMLRTRKEDLNELMRSQTNKMEIILSLQRKNFYTRRDKIMKTDDLQEDVDRIIDNALNLYLEKQDLSNKSDLKYFINQHVTYQQVNVPDNLKTKKAIKDFLKELAYKILDEKKHVLINKKQANDFYQQVIISSMDGNWIDQVDRIEKIKINAQQWGRSGRPQDLLHQEKAFEAYKDFLDKITLSTFDNLLLSKIFTNEKGQLVVVFN</sequence>
<keyword id="KW-0067">ATP-binding</keyword>
<keyword id="KW-1003">Cell membrane</keyword>
<keyword id="KW-0963">Cytoplasm</keyword>
<keyword id="KW-0472">Membrane</keyword>
<keyword id="KW-0547">Nucleotide-binding</keyword>
<keyword id="KW-0653">Protein transport</keyword>
<keyword id="KW-1278">Translocase</keyword>
<keyword id="KW-0811">Translocation</keyword>
<keyword id="KW-0813">Transport</keyword>
<protein>
    <recommendedName>
        <fullName evidence="1">Protein translocase subunit SecA 2</fullName>
        <ecNumber evidence="1">7.4.2.8</ecNumber>
    </recommendedName>
</protein>
<feature type="chain" id="PRO_0000318363" description="Protein translocase subunit SecA 2">
    <location>
        <begin position="1"/>
        <end position="788"/>
    </location>
</feature>
<feature type="binding site" evidence="1">
    <location>
        <position position="77"/>
    </location>
    <ligand>
        <name>ATP</name>
        <dbReference type="ChEBI" id="CHEBI:30616"/>
    </ligand>
</feature>
<feature type="binding site" evidence="1">
    <location>
        <begin position="95"/>
        <end position="99"/>
    </location>
    <ligand>
        <name>ATP</name>
        <dbReference type="ChEBI" id="CHEBI:30616"/>
    </ligand>
</feature>
<feature type="binding site" evidence="1">
    <location>
        <position position="491"/>
    </location>
    <ligand>
        <name>ATP</name>
        <dbReference type="ChEBI" id="CHEBI:30616"/>
    </ligand>
</feature>
<organism>
    <name type="scientific">Lactobacillus johnsonii (strain CNCM I-12250 / La1 / NCC 533)</name>
    <dbReference type="NCBI Taxonomy" id="257314"/>
    <lineage>
        <taxon>Bacteria</taxon>
        <taxon>Bacillati</taxon>
        <taxon>Bacillota</taxon>
        <taxon>Bacilli</taxon>
        <taxon>Lactobacillales</taxon>
        <taxon>Lactobacillaceae</taxon>
        <taxon>Lactobacillus</taxon>
    </lineage>
</organism>
<reference key="1">
    <citation type="journal article" date="2004" name="Proc. Natl. Acad. Sci. U.S.A.">
        <title>The genome sequence of the probiotic intestinal bacterium Lactobacillus johnsonii NCC 533.</title>
        <authorList>
            <person name="Pridmore R.D."/>
            <person name="Berger B."/>
            <person name="Desiere F."/>
            <person name="Vilanova D."/>
            <person name="Barretto C."/>
            <person name="Pittet A.-C."/>
            <person name="Zwahlen M.-C."/>
            <person name="Rouvet M."/>
            <person name="Altermann E."/>
            <person name="Barrangou R."/>
            <person name="Mollet B."/>
            <person name="Mercenier A."/>
            <person name="Klaenhammer T."/>
            <person name="Arigoni F."/>
            <person name="Schell M.A."/>
        </authorList>
    </citation>
    <scope>NUCLEOTIDE SEQUENCE [LARGE SCALE GENOMIC DNA]</scope>
    <source>
        <strain>CNCM I-1225 / La1 / NCC 533</strain>
    </source>
</reference>
<gene>
    <name evidence="1" type="primary">secA2</name>
    <name type="ordered locus">LJ_0388</name>
</gene>
<evidence type="ECO:0000255" key="1">
    <source>
        <dbReference type="HAMAP-Rule" id="MF_01382"/>
    </source>
</evidence>